<sequence>MSEFSQTVPELVAWARKNDFSISLPVDRLSFLLAVATLNGERLDGEMSEGELVDAFRHVSDAFEQTSETIGVRANNAINDMVRQRLLNRFTSEQAEGNAIYRLTPLGIGITDYYIRQREFSTLRLSMQLSIVAGELKRAADAAAEGGDEFHWHRNVYAPLKYSVAEIFDSIDLTQRIMDEQQQQVKDDIAQLLNKDWRAAISSCELLLSETSGTLRELQDTLEAAGDKLQANLLRIQDATMTHDDLHFVDRLVFDLQSKLDRIISWGQQSIDLWIGYDRHVHKFIRTAIDMDKNRVFAQRLRQSVQTYFDDPWALTYANADRLLDMRDEEMALRDDEVTGELPPDLEYEEFNEIREQLAAIIEEQLAIYKTRQTPLDLGLVVREYLAQYPRARHFDVARIVIDQAVRLGVAQADFTGLPAKWQPINDYGAKVQAHVIDKY</sequence>
<dbReference type="EMBL" id="AE017220">
    <property type="protein sequence ID" value="AAX64856.1"/>
    <property type="molecule type" value="Genomic_DNA"/>
</dbReference>
<dbReference type="RefSeq" id="WP_001288828.1">
    <property type="nucleotide sequence ID" value="NC_006905.1"/>
</dbReference>
<dbReference type="SMR" id="Q57R05"/>
<dbReference type="KEGG" id="sec:SCH_0950"/>
<dbReference type="HOGENOM" id="CLU_049853_0_0_6"/>
<dbReference type="Proteomes" id="UP000000538">
    <property type="component" value="Chromosome"/>
</dbReference>
<dbReference type="GO" id="GO:0005737">
    <property type="term" value="C:cytoplasm"/>
    <property type="evidence" value="ECO:0007669"/>
    <property type="project" value="UniProtKB-UniRule"/>
</dbReference>
<dbReference type="GO" id="GO:0009295">
    <property type="term" value="C:nucleoid"/>
    <property type="evidence" value="ECO:0007669"/>
    <property type="project" value="UniProtKB-SubCell"/>
</dbReference>
<dbReference type="GO" id="GO:0005509">
    <property type="term" value="F:calcium ion binding"/>
    <property type="evidence" value="ECO:0007669"/>
    <property type="project" value="UniProtKB-UniRule"/>
</dbReference>
<dbReference type="GO" id="GO:0051301">
    <property type="term" value="P:cell division"/>
    <property type="evidence" value="ECO:0007669"/>
    <property type="project" value="UniProtKB-KW"/>
</dbReference>
<dbReference type="GO" id="GO:0030261">
    <property type="term" value="P:chromosome condensation"/>
    <property type="evidence" value="ECO:0007669"/>
    <property type="project" value="UniProtKB-KW"/>
</dbReference>
<dbReference type="GO" id="GO:0007059">
    <property type="term" value="P:chromosome segregation"/>
    <property type="evidence" value="ECO:0007669"/>
    <property type="project" value="UniProtKB-UniRule"/>
</dbReference>
<dbReference type="GO" id="GO:0006260">
    <property type="term" value="P:DNA replication"/>
    <property type="evidence" value="ECO:0007669"/>
    <property type="project" value="UniProtKB-UniRule"/>
</dbReference>
<dbReference type="CDD" id="cd16337">
    <property type="entry name" value="MukF_C"/>
    <property type="match status" value="1"/>
</dbReference>
<dbReference type="CDD" id="cd16335">
    <property type="entry name" value="MukF_N"/>
    <property type="match status" value="1"/>
</dbReference>
<dbReference type="Gene3D" id="1.20.58.590">
    <property type="entry name" value="Chromosome partition protein MukF, middle domain"/>
    <property type="match status" value="1"/>
</dbReference>
<dbReference type="Gene3D" id="1.10.225.40">
    <property type="entry name" value="MukF, C-terminal domain"/>
    <property type="match status" value="1"/>
</dbReference>
<dbReference type="Gene3D" id="1.10.10.10">
    <property type="entry name" value="Winged helix-like DNA-binding domain superfamily/Winged helix DNA-binding domain"/>
    <property type="match status" value="1"/>
</dbReference>
<dbReference type="HAMAP" id="MF_01803">
    <property type="entry name" value="MukF"/>
    <property type="match status" value="1"/>
</dbReference>
<dbReference type="InterPro" id="IPR005582">
    <property type="entry name" value="Chromosome_partition_MukF"/>
</dbReference>
<dbReference type="InterPro" id="IPR033441">
    <property type="entry name" value="MukF_C"/>
</dbReference>
<dbReference type="InterPro" id="IPR038198">
    <property type="entry name" value="MukF_C_sf"/>
</dbReference>
<dbReference type="InterPro" id="IPR033440">
    <property type="entry name" value="MukF_M"/>
</dbReference>
<dbReference type="InterPro" id="IPR036141">
    <property type="entry name" value="MukF_M_sp"/>
</dbReference>
<dbReference type="InterPro" id="IPR033439">
    <property type="entry name" value="MukF_WHTH"/>
</dbReference>
<dbReference type="InterPro" id="IPR036388">
    <property type="entry name" value="WH-like_DNA-bd_sf"/>
</dbReference>
<dbReference type="InterPro" id="IPR036390">
    <property type="entry name" value="WH_DNA-bd_sf"/>
</dbReference>
<dbReference type="NCBIfam" id="NF003615">
    <property type="entry name" value="PRK05260.1"/>
    <property type="match status" value="1"/>
</dbReference>
<dbReference type="Pfam" id="PF03882">
    <property type="entry name" value="KicB"/>
    <property type="match status" value="1"/>
</dbReference>
<dbReference type="Pfam" id="PF17193">
    <property type="entry name" value="MukF_C"/>
    <property type="match status" value="1"/>
</dbReference>
<dbReference type="Pfam" id="PF17192">
    <property type="entry name" value="MukF_M"/>
    <property type="match status" value="1"/>
</dbReference>
<dbReference type="PIRSF" id="PIRSF018282">
    <property type="entry name" value="MukF"/>
    <property type="match status" value="1"/>
</dbReference>
<dbReference type="SUPFAM" id="SSF140570">
    <property type="entry name" value="MukF C-terminal domain-like"/>
    <property type="match status" value="1"/>
</dbReference>
<dbReference type="SUPFAM" id="SSF46785">
    <property type="entry name" value="Winged helix' DNA-binding domain"/>
    <property type="match status" value="1"/>
</dbReference>
<comment type="function">
    <text evidence="1">Involved in chromosome condensation, segregation and cell cycle progression. May participate in facilitating chromosome segregation by condensation DNA from both sides of a centrally located replisome during cell division. Not required for mini-F plasmid partitioning. Probably acts via its interaction with MukB and MukE. Overexpression results in anucleate cells. It has a calcium binding activity.</text>
</comment>
<comment type="subunit">
    <text evidence="1">Interacts, and probably forms a ternary complex, with MukE and MukB via its C-terminal region. The complex formation is stimulated by calcium or magnesium. It is required for an interaction between MukE and MukB.</text>
</comment>
<comment type="subcellular location">
    <subcellularLocation>
        <location evidence="1">Cytoplasm</location>
        <location evidence="1">Nucleoid</location>
    </subcellularLocation>
    <text evidence="1">Restricted to the nucleoid region.</text>
</comment>
<comment type="similarity">
    <text evidence="1">Belongs to the MukF family.</text>
</comment>
<name>MUKF_SALCH</name>
<accession>Q57R05</accession>
<keyword id="KW-0106">Calcium</keyword>
<keyword id="KW-0131">Cell cycle</keyword>
<keyword id="KW-0132">Cell division</keyword>
<keyword id="KW-0159">Chromosome partition</keyword>
<keyword id="KW-0963">Cytoplasm</keyword>
<keyword id="KW-0226">DNA condensation</keyword>
<evidence type="ECO:0000255" key="1">
    <source>
        <dbReference type="HAMAP-Rule" id="MF_01803"/>
    </source>
</evidence>
<organism>
    <name type="scientific">Salmonella choleraesuis (strain SC-B67)</name>
    <dbReference type="NCBI Taxonomy" id="321314"/>
    <lineage>
        <taxon>Bacteria</taxon>
        <taxon>Pseudomonadati</taxon>
        <taxon>Pseudomonadota</taxon>
        <taxon>Gammaproteobacteria</taxon>
        <taxon>Enterobacterales</taxon>
        <taxon>Enterobacteriaceae</taxon>
        <taxon>Salmonella</taxon>
    </lineage>
</organism>
<reference key="1">
    <citation type="journal article" date="2005" name="Nucleic Acids Res.">
        <title>The genome sequence of Salmonella enterica serovar Choleraesuis, a highly invasive and resistant zoonotic pathogen.</title>
        <authorList>
            <person name="Chiu C.-H."/>
            <person name="Tang P."/>
            <person name="Chu C."/>
            <person name="Hu S."/>
            <person name="Bao Q."/>
            <person name="Yu J."/>
            <person name="Chou Y.-Y."/>
            <person name="Wang H.-S."/>
            <person name="Lee Y.-S."/>
        </authorList>
    </citation>
    <scope>NUCLEOTIDE SEQUENCE [LARGE SCALE GENOMIC DNA]</scope>
    <source>
        <strain>SC-B67</strain>
    </source>
</reference>
<gene>
    <name evidence="1" type="primary">mukF</name>
    <name type="ordered locus">SCH_0950</name>
</gene>
<feature type="chain" id="PRO_1000069937" description="Chromosome partition protein MukF">
    <location>
        <begin position="1"/>
        <end position="440"/>
    </location>
</feature>
<feature type="region of interest" description="Leucine-zipper">
    <location>
        <begin position="208"/>
        <end position="236"/>
    </location>
</feature>
<protein>
    <recommendedName>
        <fullName evidence="1">Chromosome partition protein MukF</fullName>
    </recommendedName>
</protein>
<proteinExistence type="inferred from homology"/>